<evidence type="ECO:0000255" key="1">
    <source>
        <dbReference type="HAMAP-Rule" id="MF_01331"/>
    </source>
</evidence>
<evidence type="ECO:0000305" key="2"/>
<protein>
    <recommendedName>
        <fullName evidence="1">Large ribosomal subunit protein uL22</fullName>
    </recommendedName>
    <alternativeName>
        <fullName evidence="2">50S ribosomal protein L22</fullName>
    </alternativeName>
</protein>
<name>RL22_PELPD</name>
<comment type="function">
    <text evidence="1">This protein binds specifically to 23S rRNA; its binding is stimulated by other ribosomal proteins, e.g. L4, L17, and L20. It is important during the early stages of 50S assembly. It makes multiple contacts with different domains of the 23S rRNA in the assembled 50S subunit and ribosome (By similarity).</text>
</comment>
<comment type="function">
    <text evidence="1">The globular domain of the protein is located near the polypeptide exit tunnel on the outside of the subunit, while an extended beta-hairpin is found that lines the wall of the exit tunnel in the center of the 70S ribosome.</text>
</comment>
<comment type="subunit">
    <text evidence="1">Part of the 50S ribosomal subunit.</text>
</comment>
<comment type="similarity">
    <text evidence="1">Belongs to the universal ribosomal protein uL22 family.</text>
</comment>
<reference key="1">
    <citation type="submission" date="2006-10" db="EMBL/GenBank/DDBJ databases">
        <title>Complete sequence of chromosome of Pelobacter propionicus DSM 2379.</title>
        <authorList>
            <consortium name="US DOE Joint Genome Institute"/>
            <person name="Copeland A."/>
            <person name="Lucas S."/>
            <person name="Lapidus A."/>
            <person name="Barry K."/>
            <person name="Detter J.C."/>
            <person name="Glavina del Rio T."/>
            <person name="Hammon N."/>
            <person name="Israni S."/>
            <person name="Dalin E."/>
            <person name="Tice H."/>
            <person name="Pitluck S."/>
            <person name="Saunders E."/>
            <person name="Brettin T."/>
            <person name="Bruce D."/>
            <person name="Han C."/>
            <person name="Tapia R."/>
            <person name="Schmutz J."/>
            <person name="Larimer F."/>
            <person name="Land M."/>
            <person name="Hauser L."/>
            <person name="Kyrpides N."/>
            <person name="Kim E."/>
            <person name="Lovley D."/>
            <person name="Richardson P."/>
        </authorList>
    </citation>
    <scope>NUCLEOTIDE SEQUENCE [LARGE SCALE GENOMIC DNA]</scope>
    <source>
        <strain>DSM 2379 / NBRC 103807 / OttBd1</strain>
    </source>
</reference>
<dbReference type="EMBL" id="CP000482">
    <property type="protein sequence ID" value="ABK98316.1"/>
    <property type="molecule type" value="Genomic_DNA"/>
</dbReference>
<dbReference type="RefSeq" id="WP_011734628.1">
    <property type="nucleotide sequence ID" value="NC_008609.1"/>
</dbReference>
<dbReference type="SMR" id="A1ALU6"/>
<dbReference type="STRING" id="338966.Ppro_0685"/>
<dbReference type="KEGG" id="ppd:Ppro_0685"/>
<dbReference type="eggNOG" id="COG0091">
    <property type="taxonomic scope" value="Bacteria"/>
</dbReference>
<dbReference type="HOGENOM" id="CLU_083987_3_3_7"/>
<dbReference type="OrthoDB" id="9805969at2"/>
<dbReference type="Proteomes" id="UP000006732">
    <property type="component" value="Chromosome"/>
</dbReference>
<dbReference type="GO" id="GO:0022625">
    <property type="term" value="C:cytosolic large ribosomal subunit"/>
    <property type="evidence" value="ECO:0007669"/>
    <property type="project" value="TreeGrafter"/>
</dbReference>
<dbReference type="GO" id="GO:0019843">
    <property type="term" value="F:rRNA binding"/>
    <property type="evidence" value="ECO:0007669"/>
    <property type="project" value="UniProtKB-UniRule"/>
</dbReference>
<dbReference type="GO" id="GO:0003735">
    <property type="term" value="F:structural constituent of ribosome"/>
    <property type="evidence" value="ECO:0007669"/>
    <property type="project" value="InterPro"/>
</dbReference>
<dbReference type="GO" id="GO:0006412">
    <property type="term" value="P:translation"/>
    <property type="evidence" value="ECO:0007669"/>
    <property type="project" value="UniProtKB-UniRule"/>
</dbReference>
<dbReference type="CDD" id="cd00336">
    <property type="entry name" value="Ribosomal_L22"/>
    <property type="match status" value="1"/>
</dbReference>
<dbReference type="Gene3D" id="3.90.470.10">
    <property type="entry name" value="Ribosomal protein L22/L17"/>
    <property type="match status" value="1"/>
</dbReference>
<dbReference type="HAMAP" id="MF_01331_B">
    <property type="entry name" value="Ribosomal_uL22_B"/>
    <property type="match status" value="1"/>
</dbReference>
<dbReference type="InterPro" id="IPR001063">
    <property type="entry name" value="Ribosomal_uL22"/>
</dbReference>
<dbReference type="InterPro" id="IPR005727">
    <property type="entry name" value="Ribosomal_uL22_bac/chlpt-type"/>
</dbReference>
<dbReference type="InterPro" id="IPR047867">
    <property type="entry name" value="Ribosomal_uL22_bac/org-type"/>
</dbReference>
<dbReference type="InterPro" id="IPR018260">
    <property type="entry name" value="Ribosomal_uL22_CS"/>
</dbReference>
<dbReference type="InterPro" id="IPR036394">
    <property type="entry name" value="Ribosomal_uL22_sf"/>
</dbReference>
<dbReference type="NCBIfam" id="TIGR01044">
    <property type="entry name" value="rplV_bact"/>
    <property type="match status" value="1"/>
</dbReference>
<dbReference type="PANTHER" id="PTHR13501">
    <property type="entry name" value="CHLOROPLAST 50S RIBOSOMAL PROTEIN L22-RELATED"/>
    <property type="match status" value="1"/>
</dbReference>
<dbReference type="PANTHER" id="PTHR13501:SF8">
    <property type="entry name" value="LARGE RIBOSOMAL SUBUNIT PROTEIN UL22M"/>
    <property type="match status" value="1"/>
</dbReference>
<dbReference type="Pfam" id="PF00237">
    <property type="entry name" value="Ribosomal_L22"/>
    <property type="match status" value="1"/>
</dbReference>
<dbReference type="SUPFAM" id="SSF54843">
    <property type="entry name" value="Ribosomal protein L22"/>
    <property type="match status" value="1"/>
</dbReference>
<dbReference type="PROSITE" id="PS00464">
    <property type="entry name" value="RIBOSOMAL_L22"/>
    <property type="match status" value="1"/>
</dbReference>
<gene>
    <name evidence="1" type="primary">rplV</name>
    <name type="ordered locus">Ppro_0685</name>
</gene>
<accession>A1ALU6</accession>
<proteinExistence type="inferred from homology"/>
<feature type="chain" id="PRO_1000052622" description="Large ribosomal subunit protein uL22">
    <location>
        <begin position="1"/>
        <end position="111"/>
    </location>
</feature>
<organism>
    <name type="scientific">Pelobacter propionicus (strain DSM 2379 / NBRC 103807 / OttBd1)</name>
    <dbReference type="NCBI Taxonomy" id="338966"/>
    <lineage>
        <taxon>Bacteria</taxon>
        <taxon>Pseudomonadati</taxon>
        <taxon>Thermodesulfobacteriota</taxon>
        <taxon>Desulfuromonadia</taxon>
        <taxon>Desulfuromonadales</taxon>
        <taxon>Desulfuromonadaceae</taxon>
        <taxon>Pelobacter</taxon>
    </lineage>
</organism>
<keyword id="KW-1185">Reference proteome</keyword>
<keyword id="KW-0687">Ribonucleoprotein</keyword>
<keyword id="KW-0689">Ribosomal protein</keyword>
<keyword id="KW-0694">RNA-binding</keyword>
<keyword id="KW-0699">rRNA-binding</keyword>
<sequence>MESSAKLTSVRLSPRKTRLVVDLVRGKVIQEALNTLRFLPQPSAKLVSKLLQSAVANAEQKGVSDVDALYVKTIYVDGGSVLKRFLPRAMGRASKIRKPTSHISVTLSDSK</sequence>